<dbReference type="EC" id="1.10.3.9" evidence="1"/>
<dbReference type="EMBL" id="J01448">
    <property type="protein sequence ID" value="AAA84687.1"/>
    <property type="molecule type" value="Genomic_DNA"/>
</dbReference>
<dbReference type="PIR" id="B38055">
    <property type="entry name" value="FMNT3D"/>
</dbReference>
<dbReference type="RefSeq" id="YP_010143727.1">
    <property type="nucleotide sequence ID" value="NC_056977.1"/>
</dbReference>
<dbReference type="SMR" id="P69561"/>
<dbReference type="GeneID" id="67139664"/>
<dbReference type="GO" id="GO:0009535">
    <property type="term" value="C:chloroplast thylakoid membrane"/>
    <property type="evidence" value="ECO:0007669"/>
    <property type="project" value="UniProtKB-SubCell"/>
</dbReference>
<dbReference type="GO" id="GO:0009523">
    <property type="term" value="C:photosystem II"/>
    <property type="evidence" value="ECO:0007669"/>
    <property type="project" value="UniProtKB-KW"/>
</dbReference>
<dbReference type="GO" id="GO:0016168">
    <property type="term" value="F:chlorophyll binding"/>
    <property type="evidence" value="ECO:0007669"/>
    <property type="project" value="UniProtKB-UniRule"/>
</dbReference>
<dbReference type="GO" id="GO:0045156">
    <property type="term" value="F:electron transporter, transferring electrons within the cyclic electron transport pathway of photosynthesis activity"/>
    <property type="evidence" value="ECO:0007669"/>
    <property type="project" value="InterPro"/>
</dbReference>
<dbReference type="GO" id="GO:0005506">
    <property type="term" value="F:iron ion binding"/>
    <property type="evidence" value="ECO:0007669"/>
    <property type="project" value="UniProtKB-UniRule"/>
</dbReference>
<dbReference type="GO" id="GO:0016682">
    <property type="term" value="F:oxidoreductase activity, acting on diphenols and related substances as donors, oxygen as acceptor"/>
    <property type="evidence" value="ECO:0007669"/>
    <property type="project" value="UniProtKB-UniRule"/>
</dbReference>
<dbReference type="GO" id="GO:0010242">
    <property type="term" value="F:oxygen evolving activity"/>
    <property type="evidence" value="ECO:0007669"/>
    <property type="project" value="UniProtKB-EC"/>
</dbReference>
<dbReference type="GO" id="GO:0009772">
    <property type="term" value="P:photosynthetic electron transport in photosystem II"/>
    <property type="evidence" value="ECO:0007669"/>
    <property type="project" value="InterPro"/>
</dbReference>
<dbReference type="GO" id="GO:0009635">
    <property type="term" value="P:response to herbicide"/>
    <property type="evidence" value="ECO:0007669"/>
    <property type="project" value="UniProtKB-KW"/>
</dbReference>
<dbReference type="CDD" id="cd09289">
    <property type="entry name" value="Photosystem-II_D1"/>
    <property type="match status" value="1"/>
</dbReference>
<dbReference type="FunFam" id="1.20.85.10:FF:000002">
    <property type="entry name" value="Photosystem II protein D1"/>
    <property type="match status" value="1"/>
</dbReference>
<dbReference type="Gene3D" id="1.20.85.10">
    <property type="entry name" value="Photosystem II protein D1-like"/>
    <property type="match status" value="1"/>
</dbReference>
<dbReference type="HAMAP" id="MF_01379">
    <property type="entry name" value="PSII_PsbA_D1"/>
    <property type="match status" value="1"/>
</dbReference>
<dbReference type="InterPro" id="IPR055266">
    <property type="entry name" value="D1/D2"/>
</dbReference>
<dbReference type="InterPro" id="IPR036854">
    <property type="entry name" value="Photo_II_D1/D2_sf"/>
</dbReference>
<dbReference type="InterPro" id="IPR000484">
    <property type="entry name" value="Photo_RC_L/M"/>
</dbReference>
<dbReference type="InterPro" id="IPR055265">
    <property type="entry name" value="Photo_RC_L/M_CS"/>
</dbReference>
<dbReference type="InterPro" id="IPR005867">
    <property type="entry name" value="PSII_D1"/>
</dbReference>
<dbReference type="NCBIfam" id="TIGR01151">
    <property type="entry name" value="psbA"/>
    <property type="match status" value="1"/>
</dbReference>
<dbReference type="PANTHER" id="PTHR33149:SF12">
    <property type="entry name" value="PHOTOSYSTEM II D2 PROTEIN"/>
    <property type="match status" value="1"/>
</dbReference>
<dbReference type="PANTHER" id="PTHR33149">
    <property type="entry name" value="PHOTOSYSTEM II PROTEIN D1"/>
    <property type="match status" value="1"/>
</dbReference>
<dbReference type="Pfam" id="PF00124">
    <property type="entry name" value="Photo_RC"/>
    <property type="match status" value="1"/>
</dbReference>
<dbReference type="PRINTS" id="PR00256">
    <property type="entry name" value="REACTNCENTRE"/>
</dbReference>
<dbReference type="SUPFAM" id="SSF81483">
    <property type="entry name" value="Bacterial photosystem II reaction centre, L and M subunits"/>
    <property type="match status" value="1"/>
</dbReference>
<dbReference type="PROSITE" id="PS00244">
    <property type="entry name" value="REACTION_CENTER"/>
    <property type="match status" value="1"/>
</dbReference>
<evidence type="ECO:0000255" key="1">
    <source>
        <dbReference type="HAMAP-Rule" id="MF_01379"/>
    </source>
</evidence>
<evidence type="ECO:0000303" key="2">
    <source>
    </source>
</evidence>
<organism>
    <name type="scientific">Nicotiana debneyi</name>
    <name type="common">Debney's tobacco</name>
    <dbReference type="NCBI Taxonomy" id="4089"/>
    <lineage>
        <taxon>Eukaryota</taxon>
        <taxon>Viridiplantae</taxon>
        <taxon>Streptophyta</taxon>
        <taxon>Embryophyta</taxon>
        <taxon>Tracheophyta</taxon>
        <taxon>Spermatophyta</taxon>
        <taxon>Magnoliopsida</taxon>
        <taxon>eudicotyledons</taxon>
        <taxon>Gunneridae</taxon>
        <taxon>Pentapetalae</taxon>
        <taxon>asterids</taxon>
        <taxon>lamiids</taxon>
        <taxon>Solanales</taxon>
        <taxon>Solanaceae</taxon>
        <taxon>Nicotianoideae</taxon>
        <taxon>Nicotianeae</taxon>
        <taxon>Nicotiana</taxon>
    </lineage>
</organism>
<name>PSBA_NICDE</name>
<protein>
    <recommendedName>
        <fullName evidence="1">Photosystem II protein D1</fullName>
        <shortName evidence="1">PSII D1 protein</shortName>
        <ecNumber evidence="1">1.10.3.9</ecNumber>
    </recommendedName>
    <alternativeName>
        <fullName evidence="2">32 kDa thylakoid membrane protein</fullName>
    </alternativeName>
    <alternativeName>
        <fullName evidence="1">Photosystem II Q(B) protein</fullName>
    </alternativeName>
</protein>
<sequence length="353" mass="38951">MTAILERRESESLWGRFCNWITSTENRLYIGWFGVLMIPTLLTATSVFIIAFIAAPPVDIDGIREPVSGSLLYGNNIISGAIIPTSAAIGLHFYPIWEAASVDEWLYNGGPYELIVLHFLLGVACYMGREWELSFRLGMRPWIAVAYSAPVAAATAVFLIYPIGQGSFSDGMPLGISGTFNFMIVFQAEHNILMHPFHMLGVAGVFGGSLFSAMHGSLVTSSLIRETTENESANEGYRFGQEEETYNIVAAHGYFGRLIFQYASFNNSRSLHFFLAAWPVVGIWFTALGISTMAFNLNGFNFNQSVVDSQGRVINTWADIINRANLGMEVMHERNAHNFPLDLAAIEAPSTNG</sequence>
<feature type="initiator methionine" description="Removed" evidence="1">
    <location>
        <position position="1"/>
    </location>
</feature>
<feature type="chain" id="PRO_0000090454" description="Photosystem II protein D1" evidence="1">
    <location>
        <begin position="2"/>
        <end position="344"/>
    </location>
</feature>
<feature type="propeptide" id="PRO_0000316464" evidence="1">
    <location>
        <begin position="345"/>
        <end position="353"/>
    </location>
</feature>
<feature type="transmembrane region" description="Helical" evidence="1">
    <location>
        <begin position="29"/>
        <end position="46"/>
    </location>
</feature>
<feature type="transmembrane region" description="Helical" evidence="1">
    <location>
        <begin position="118"/>
        <end position="133"/>
    </location>
</feature>
<feature type="transmembrane region" description="Helical" evidence="1">
    <location>
        <begin position="142"/>
        <end position="156"/>
    </location>
</feature>
<feature type="transmembrane region" description="Helical" evidence="1">
    <location>
        <begin position="197"/>
        <end position="218"/>
    </location>
</feature>
<feature type="transmembrane region" description="Helical" evidence="1">
    <location>
        <begin position="274"/>
        <end position="288"/>
    </location>
</feature>
<feature type="binding site" description="axial binding residue" evidence="1">
    <location>
        <position position="118"/>
    </location>
    <ligand>
        <name>chlorophyll a</name>
        <dbReference type="ChEBI" id="CHEBI:58416"/>
        <label>ChlzD1</label>
    </ligand>
    <ligandPart>
        <name>Mg</name>
        <dbReference type="ChEBI" id="CHEBI:25107"/>
    </ligandPart>
</feature>
<feature type="binding site" evidence="1">
    <location>
        <position position="126"/>
    </location>
    <ligand>
        <name>pheophytin a</name>
        <dbReference type="ChEBI" id="CHEBI:136840"/>
        <label>D1</label>
    </ligand>
</feature>
<feature type="binding site" evidence="1">
    <location>
        <position position="170"/>
    </location>
    <ligand>
        <name>[CaMn4O5] cluster</name>
        <dbReference type="ChEBI" id="CHEBI:189552"/>
    </ligand>
</feature>
<feature type="binding site" evidence="1">
    <location>
        <position position="189"/>
    </location>
    <ligand>
        <name>[CaMn4O5] cluster</name>
        <dbReference type="ChEBI" id="CHEBI:189552"/>
    </ligand>
</feature>
<feature type="binding site" description="axial binding residue" evidence="1">
    <location>
        <position position="198"/>
    </location>
    <ligand>
        <name>chlorophyll a</name>
        <dbReference type="ChEBI" id="CHEBI:58416"/>
        <label>PD1</label>
    </ligand>
    <ligandPart>
        <name>Mg</name>
        <dbReference type="ChEBI" id="CHEBI:25107"/>
    </ligandPart>
</feature>
<feature type="binding site" evidence="1">
    <location>
        <position position="215"/>
    </location>
    <ligand>
        <name>a quinone</name>
        <dbReference type="ChEBI" id="CHEBI:132124"/>
        <label>B</label>
    </ligand>
</feature>
<feature type="binding site" evidence="1">
    <location>
        <position position="215"/>
    </location>
    <ligand>
        <name>Fe cation</name>
        <dbReference type="ChEBI" id="CHEBI:24875"/>
        <note>ligand shared with heterodimeric partner</note>
    </ligand>
</feature>
<feature type="binding site" evidence="1">
    <location>
        <begin position="264"/>
        <end position="265"/>
    </location>
    <ligand>
        <name>a quinone</name>
        <dbReference type="ChEBI" id="CHEBI:132124"/>
        <label>B</label>
    </ligand>
</feature>
<feature type="binding site" evidence="1">
    <location>
        <position position="272"/>
    </location>
    <ligand>
        <name>Fe cation</name>
        <dbReference type="ChEBI" id="CHEBI:24875"/>
        <note>ligand shared with heterodimeric partner</note>
    </ligand>
</feature>
<feature type="binding site" evidence="1">
    <location>
        <position position="332"/>
    </location>
    <ligand>
        <name>[CaMn4O5] cluster</name>
        <dbReference type="ChEBI" id="CHEBI:189552"/>
    </ligand>
</feature>
<feature type="binding site" evidence="1">
    <location>
        <position position="333"/>
    </location>
    <ligand>
        <name>[CaMn4O5] cluster</name>
        <dbReference type="ChEBI" id="CHEBI:189552"/>
    </ligand>
</feature>
<feature type="binding site" evidence="1">
    <location>
        <position position="342"/>
    </location>
    <ligand>
        <name>[CaMn4O5] cluster</name>
        <dbReference type="ChEBI" id="CHEBI:189552"/>
    </ligand>
</feature>
<feature type="binding site" evidence="1">
    <location>
        <position position="344"/>
    </location>
    <ligand>
        <name>[CaMn4O5] cluster</name>
        <dbReference type="ChEBI" id="CHEBI:189552"/>
    </ligand>
</feature>
<feature type="site" description="Tyrosine radical intermediate" evidence="1">
    <location>
        <position position="161"/>
    </location>
</feature>
<feature type="site" description="Stabilizes free radical intermediate" evidence="1">
    <location>
        <position position="190"/>
    </location>
</feature>
<feature type="site" description="Cleavage; by CTPA" evidence="1">
    <location>
        <begin position="344"/>
        <end position="345"/>
    </location>
</feature>
<feature type="modified residue" description="N-acetylthreonine" evidence="1">
    <location>
        <position position="2"/>
    </location>
</feature>
<feature type="modified residue" description="Phosphothreonine" evidence="1">
    <location>
        <position position="2"/>
    </location>
</feature>
<gene>
    <name evidence="1" type="primary">psbA</name>
</gene>
<reference key="1">
    <citation type="journal article" date="1982" name="Proc. Natl. Acad. Sci. U.S.A.">
        <title>Nucleotide sequence of the gene for the M-r 32,000 thylakoid membrane protein from Spinacia oleracea and Nicotiana debneyi predicts a totally conserved primary translation product of M-r 38,950.</title>
        <authorList>
            <person name="Zurawski G."/>
            <person name="Bohnert H.J."/>
            <person name="Whitfeld P.R."/>
            <person name="Bottomley W."/>
        </authorList>
    </citation>
    <scope>NUCLEOTIDE SEQUENCE [GENOMIC DNA]</scope>
</reference>
<accession>P69561</accession>
<accession>P02955</accession>
<geneLocation type="chloroplast"/>
<comment type="function">
    <text evidence="1">Photosystem II (PSII) is a light-driven water:plastoquinone oxidoreductase that uses light energy to abstract electrons from H(2)O, generating O(2) and a proton gradient subsequently used for ATP formation. It consists of a core antenna complex that captures photons, and an electron transfer chain that converts photonic excitation into a charge separation. The D1/D2 (PsbA/PsbD) reaction center heterodimer binds P680, the primary electron donor of PSII as well as several subsequent electron acceptors.</text>
</comment>
<comment type="catalytic activity">
    <reaction evidence="1">
        <text>2 a plastoquinone + 4 hnu + 2 H2O = 2 a plastoquinol + O2</text>
        <dbReference type="Rhea" id="RHEA:36359"/>
        <dbReference type="Rhea" id="RHEA-COMP:9561"/>
        <dbReference type="Rhea" id="RHEA-COMP:9562"/>
        <dbReference type="ChEBI" id="CHEBI:15377"/>
        <dbReference type="ChEBI" id="CHEBI:15379"/>
        <dbReference type="ChEBI" id="CHEBI:17757"/>
        <dbReference type="ChEBI" id="CHEBI:30212"/>
        <dbReference type="ChEBI" id="CHEBI:62192"/>
        <dbReference type="EC" id="1.10.3.9"/>
    </reaction>
</comment>
<comment type="cofactor">
    <text evidence="1">The D1/D2 heterodimer binds P680, chlorophylls that are the primary electron donor of PSII, and subsequent electron acceptors. It shares a non-heme iron and each subunit binds pheophytin, quinone, additional chlorophylls, carotenoids and lipids. D1 provides most of the ligands for the Mn4-Ca-O5 cluster of the oxygen-evolving complex (OEC). There is also a Cl(-1) ion associated with D1 and D2, which is required for oxygen evolution. The PSII complex binds additional chlorophylls, carotenoids and specific lipids.</text>
</comment>
<comment type="subunit">
    <text evidence="1">PSII is composed of 1 copy each of membrane proteins PsbA, PsbB, PsbC, PsbD, PsbE, PsbF, PsbH, PsbI, PsbJ, PsbK, PsbL, PsbM, PsbT, PsbX, PsbY, PsbZ, Psb30/Ycf12, at least 3 peripheral proteins of the oxygen-evolving complex and a large number of cofactors. It forms dimeric complexes.</text>
</comment>
<comment type="subcellular location">
    <subcellularLocation>
        <location evidence="1">Plastid</location>
        <location evidence="1">Chloroplast thylakoid membrane</location>
        <topology evidence="1">Multi-pass membrane protein</topology>
    </subcellularLocation>
</comment>
<comment type="PTM">
    <text evidence="1">Tyr-161 forms a radical intermediate that is referred to as redox-active TyrZ, YZ or Y-Z.</text>
</comment>
<comment type="PTM">
    <text evidence="1">C-terminally processed by CTPA; processing is essential to allow assembly of the oxygen-evolving complex and thus photosynthetic growth.</text>
</comment>
<comment type="miscellaneous">
    <text evidence="1">2 of the reaction center chlorophylls (ChlD1 and ChlD2) are entirely coordinated by water.</text>
</comment>
<comment type="miscellaneous">
    <text evidence="1">Herbicides such as atrazine, BNT, diuron or ioxynil bind in the Q(B) binding site and block subsequent electron transfer.</text>
</comment>
<comment type="similarity">
    <text evidence="1">Belongs to the reaction center PufL/M/PsbA/D family.</text>
</comment>
<proteinExistence type="inferred from homology"/>
<keyword id="KW-0007">Acetylation</keyword>
<keyword id="KW-0106">Calcium</keyword>
<keyword id="KW-0148">Chlorophyll</keyword>
<keyword id="KW-0150">Chloroplast</keyword>
<keyword id="KW-0157">Chromophore</keyword>
<keyword id="KW-0249">Electron transport</keyword>
<keyword id="KW-0359">Herbicide resistance</keyword>
<keyword id="KW-0408">Iron</keyword>
<keyword id="KW-0460">Magnesium</keyword>
<keyword id="KW-0464">Manganese</keyword>
<keyword id="KW-0472">Membrane</keyword>
<keyword id="KW-0479">Metal-binding</keyword>
<keyword id="KW-0560">Oxidoreductase</keyword>
<keyword id="KW-0597">Phosphoprotein</keyword>
<keyword id="KW-0602">Photosynthesis</keyword>
<keyword id="KW-0604">Photosystem II</keyword>
<keyword id="KW-0934">Plastid</keyword>
<keyword id="KW-0793">Thylakoid</keyword>
<keyword id="KW-0812">Transmembrane</keyword>
<keyword id="KW-1133">Transmembrane helix</keyword>
<keyword id="KW-0813">Transport</keyword>